<feature type="chain" id="PRO_0000201133" description="Molybdenum-pterin-binding protein MopB">
    <location>
        <begin position="1"/>
        <end position="270"/>
    </location>
</feature>
<feature type="domain" description="Mop 1" evidence="1">
    <location>
        <begin position="131"/>
        <end position="197"/>
    </location>
</feature>
<feature type="domain" description="Mop 2" evidence="1">
    <location>
        <begin position="203"/>
        <end position="269"/>
    </location>
</feature>
<protein>
    <recommendedName>
        <fullName>Molybdenum-pterin-binding protein MopB</fullName>
    </recommendedName>
</protein>
<keyword id="KW-0500">Molybdenum</keyword>
<keyword id="KW-0677">Repeat</keyword>
<keyword id="KW-0813">Transport</keyword>
<organism>
    <name type="scientific">Rhodobacter capsulatus</name>
    <name type="common">Rhodopseudomonas capsulata</name>
    <dbReference type="NCBI Taxonomy" id="1061"/>
    <lineage>
        <taxon>Bacteria</taxon>
        <taxon>Pseudomonadati</taxon>
        <taxon>Pseudomonadota</taxon>
        <taxon>Alphaproteobacteria</taxon>
        <taxon>Rhodobacterales</taxon>
        <taxon>Rhodobacter group</taxon>
        <taxon>Rhodobacter</taxon>
    </lineage>
</organism>
<comment type="interaction">
    <interactant intactId="EBI-6407928">
        <id>Q08386</id>
    </interactant>
    <interactant intactId="EBI-6407908">
        <id>Q08385</id>
        <label>mopA</label>
    </interactant>
    <organismsDiffer>false</organismsDiffer>
    <experiments>4</experiments>
</comment>
<comment type="interaction">
    <interactant intactId="EBI-6407928">
        <id>Q08386</id>
    </interactant>
    <interactant intactId="EBI-6407928">
        <id>Q08386</id>
        <label>mopB</label>
    </interactant>
    <organismsDiffer>false</organismsDiffer>
    <experiments>4</experiments>
</comment>
<comment type="interaction">
    <interactant intactId="EBI-6407928">
        <id>Q08386</id>
    </interactant>
    <interactant intactId="EBI-6407918">
        <id>D5ARW3</id>
        <label>RCAP_rcc03261</label>
    </interactant>
    <organismsDiffer>true</organismsDiffer>
    <experiments>3</experiments>
</comment>
<comment type="similarity">
    <text evidence="2">Belongs to the ModE family.</text>
</comment>
<gene>
    <name type="primary">mopB</name>
</gene>
<accession>Q08386</accession>
<evidence type="ECO:0000255" key="1">
    <source>
        <dbReference type="PROSITE-ProRule" id="PRU01213"/>
    </source>
</evidence>
<evidence type="ECO:0000305" key="2"/>
<sequence>MAATKQGGGDDGRCARGVVLERTGARMGAERVALLAAIGRTGSISAAAREVGLSYKAAWDGVQAMNNLLAAPVVTAAPGGKAGGGAVLTPAGEKLIAAYGAIEAGVAKLLSSFEKSLNLDPAEVLRGLSLRTSARNAWACKVWSVAADDVAAQVRMRLGEGQDLTAVITARSAAEMRLAPGSEVLALVKSNFVLLAGAGVPERLSVRNRVRGRVIERIDAPLSSEVTLDLGGGKTITATITRDSAEMLDLHPGVETTALIKSSHVILALP</sequence>
<proteinExistence type="evidence at protein level"/>
<reference key="1">
    <citation type="journal article" date="1993" name="J. Bacteriol.">
        <title>Characterization of Rhodobacter capsulatus genes encoding a molybdenum transport system and putative molybdenum-pterin-binding proteins.</title>
        <authorList>
            <person name="Wang G."/>
            <person name="Angermueller S."/>
            <person name="Klipp W."/>
        </authorList>
    </citation>
    <scope>NUCLEOTIDE SEQUENCE [GENOMIC DNA]</scope>
    <source>
        <strain>ATCC 33303 / B10</strain>
    </source>
</reference>
<name>MOPB_RHOCA</name>
<dbReference type="EMBL" id="L06254">
    <property type="protein sequence ID" value="AAA71913.1"/>
    <property type="molecule type" value="Unassigned_DNA"/>
</dbReference>
<dbReference type="PIR" id="G36914">
    <property type="entry name" value="G36914"/>
</dbReference>
<dbReference type="SMR" id="Q08386"/>
<dbReference type="IntAct" id="Q08386">
    <property type="interactions" value="2"/>
</dbReference>
<dbReference type="GO" id="GO:0003700">
    <property type="term" value="F:DNA-binding transcription factor activity"/>
    <property type="evidence" value="ECO:0007669"/>
    <property type="project" value="InterPro"/>
</dbReference>
<dbReference type="GO" id="GO:0042802">
    <property type="term" value="F:identical protein binding"/>
    <property type="evidence" value="ECO:0000353"/>
    <property type="project" value="IntAct"/>
</dbReference>
<dbReference type="GO" id="GO:0030151">
    <property type="term" value="F:molybdenum ion binding"/>
    <property type="evidence" value="ECO:0007669"/>
    <property type="project" value="InterPro"/>
</dbReference>
<dbReference type="GO" id="GO:0015689">
    <property type="term" value="P:molybdate ion transport"/>
    <property type="evidence" value="ECO:0007669"/>
    <property type="project" value="InterPro"/>
</dbReference>
<dbReference type="FunFam" id="2.40.50.100:FF:000086">
    <property type="entry name" value="Molybdenum transport operon repressor MopB"/>
    <property type="match status" value="2"/>
</dbReference>
<dbReference type="Gene3D" id="2.40.50.100">
    <property type="match status" value="2"/>
</dbReference>
<dbReference type="Gene3D" id="1.10.10.10">
    <property type="entry name" value="Winged helix-like DNA-binding domain superfamily/Winged helix DNA-binding domain"/>
    <property type="match status" value="1"/>
</dbReference>
<dbReference type="InterPro" id="IPR008995">
    <property type="entry name" value="Mo/tungstate-bd_C_term_dom"/>
</dbReference>
<dbReference type="InterPro" id="IPR016462">
    <property type="entry name" value="ModE"/>
</dbReference>
<dbReference type="InterPro" id="IPR003725">
    <property type="entry name" value="ModE-bd_N"/>
</dbReference>
<dbReference type="InterPro" id="IPR051815">
    <property type="entry name" value="Molybdate_resp_trans_reg"/>
</dbReference>
<dbReference type="InterPro" id="IPR004606">
    <property type="entry name" value="Mop_domain"/>
</dbReference>
<dbReference type="InterPro" id="IPR005116">
    <property type="entry name" value="Transp-assoc_OB_typ1"/>
</dbReference>
<dbReference type="InterPro" id="IPR000847">
    <property type="entry name" value="Tscrpt_reg_HTH_LysR"/>
</dbReference>
<dbReference type="InterPro" id="IPR036388">
    <property type="entry name" value="WH-like_DNA-bd_sf"/>
</dbReference>
<dbReference type="InterPro" id="IPR036390">
    <property type="entry name" value="WH_DNA-bd_sf"/>
</dbReference>
<dbReference type="NCBIfam" id="TIGR00637">
    <property type="entry name" value="ModE_repress"/>
    <property type="match status" value="1"/>
</dbReference>
<dbReference type="NCBIfam" id="TIGR00638">
    <property type="entry name" value="Mop"/>
    <property type="match status" value="2"/>
</dbReference>
<dbReference type="PANTHER" id="PTHR30432:SF1">
    <property type="entry name" value="DNA-BINDING TRANSCRIPTIONAL DUAL REGULATOR MODE"/>
    <property type="match status" value="1"/>
</dbReference>
<dbReference type="PANTHER" id="PTHR30432">
    <property type="entry name" value="TRANSCRIPTIONAL REGULATOR MODE"/>
    <property type="match status" value="1"/>
</dbReference>
<dbReference type="Pfam" id="PF00126">
    <property type="entry name" value="HTH_1"/>
    <property type="match status" value="1"/>
</dbReference>
<dbReference type="Pfam" id="PF03459">
    <property type="entry name" value="TOBE"/>
    <property type="match status" value="2"/>
</dbReference>
<dbReference type="PIRSF" id="PIRSF005763">
    <property type="entry name" value="Txn_reg_ModE"/>
    <property type="match status" value="1"/>
</dbReference>
<dbReference type="SUPFAM" id="SSF50331">
    <property type="entry name" value="MOP-like"/>
    <property type="match status" value="2"/>
</dbReference>
<dbReference type="SUPFAM" id="SSF46785">
    <property type="entry name" value="Winged helix' DNA-binding domain"/>
    <property type="match status" value="1"/>
</dbReference>
<dbReference type="PROSITE" id="PS51866">
    <property type="entry name" value="MOP"/>
    <property type="match status" value="2"/>
</dbReference>